<name>Y2453_STAEQ</name>
<accession>Q5HK97</accession>
<reference key="1">
    <citation type="journal article" date="2005" name="J. Bacteriol.">
        <title>Insights on evolution of virulence and resistance from the complete genome analysis of an early methicillin-resistant Staphylococcus aureus strain and a biofilm-producing methicillin-resistant Staphylococcus epidermidis strain.</title>
        <authorList>
            <person name="Gill S.R."/>
            <person name="Fouts D.E."/>
            <person name="Archer G.L."/>
            <person name="Mongodin E.F."/>
            <person name="DeBoy R.T."/>
            <person name="Ravel J."/>
            <person name="Paulsen I.T."/>
            <person name="Kolonay J.F."/>
            <person name="Brinkac L.M."/>
            <person name="Beanan M.J."/>
            <person name="Dodson R.J."/>
            <person name="Daugherty S.C."/>
            <person name="Madupu R."/>
            <person name="Angiuoli S.V."/>
            <person name="Durkin A.S."/>
            <person name="Haft D.H."/>
            <person name="Vamathevan J.J."/>
            <person name="Khouri H."/>
            <person name="Utterback T.R."/>
            <person name="Lee C."/>
            <person name="Dimitrov G."/>
            <person name="Jiang L."/>
            <person name="Qin H."/>
            <person name="Weidman J."/>
            <person name="Tran K."/>
            <person name="Kang K.H."/>
            <person name="Hance I.R."/>
            <person name="Nelson K.E."/>
            <person name="Fraser C.M."/>
        </authorList>
    </citation>
    <scope>NUCLEOTIDE SEQUENCE [LARGE SCALE GENOMIC DNA]</scope>
    <source>
        <strain>ATCC 35984 / DSM 28319 / BCRC 17069 / CCUG 31568 / BM 3577 / RP62A</strain>
    </source>
</reference>
<protein>
    <recommendedName>
        <fullName>Uncharacterized lipoprotein SERP2453</fullName>
    </recommendedName>
</protein>
<proteinExistence type="inferred from homology"/>
<gene>
    <name type="ordered locus">SERP2453</name>
</gene>
<dbReference type="EMBL" id="CP000029">
    <property type="protein sequence ID" value="AAW53322.1"/>
    <property type="molecule type" value="Genomic_DNA"/>
</dbReference>
<dbReference type="RefSeq" id="WP_010959364.1">
    <property type="nucleotide sequence ID" value="NC_002976.3"/>
</dbReference>
<dbReference type="SMR" id="Q5HK97"/>
<dbReference type="STRING" id="176279.SERP2453"/>
<dbReference type="KEGG" id="ser:SERP2453"/>
<dbReference type="eggNOG" id="ENOG5033UD8">
    <property type="taxonomic scope" value="Bacteria"/>
</dbReference>
<dbReference type="HOGENOM" id="CLU_071589_0_0_9"/>
<dbReference type="Proteomes" id="UP000000531">
    <property type="component" value="Chromosome"/>
</dbReference>
<dbReference type="GO" id="GO:0005886">
    <property type="term" value="C:plasma membrane"/>
    <property type="evidence" value="ECO:0007669"/>
    <property type="project" value="UniProtKB-SubCell"/>
</dbReference>
<dbReference type="Gene3D" id="2.50.20.40">
    <property type="match status" value="1"/>
</dbReference>
<dbReference type="InterPro" id="IPR007595">
    <property type="entry name" value="Csa"/>
</dbReference>
<dbReference type="InterPro" id="IPR038641">
    <property type="entry name" value="Csa_sf"/>
</dbReference>
<dbReference type="NCBIfam" id="TIGR01742">
    <property type="entry name" value="SA_tandem_lipo"/>
    <property type="match status" value="1"/>
</dbReference>
<dbReference type="Pfam" id="PF04507">
    <property type="entry name" value="DUF576"/>
    <property type="match status" value="1"/>
</dbReference>
<dbReference type="PROSITE" id="PS51257">
    <property type="entry name" value="PROKAR_LIPOPROTEIN"/>
    <property type="match status" value="1"/>
</dbReference>
<organism>
    <name type="scientific">Staphylococcus epidermidis (strain ATCC 35984 / DSM 28319 / BCRC 17069 / CCUG 31568 / BM 3577 / RP62A)</name>
    <dbReference type="NCBI Taxonomy" id="176279"/>
    <lineage>
        <taxon>Bacteria</taxon>
        <taxon>Bacillati</taxon>
        <taxon>Bacillota</taxon>
        <taxon>Bacilli</taxon>
        <taxon>Bacillales</taxon>
        <taxon>Staphylococcaceae</taxon>
        <taxon>Staphylococcus</taxon>
    </lineage>
</organism>
<keyword id="KW-1003">Cell membrane</keyword>
<keyword id="KW-0449">Lipoprotein</keyword>
<keyword id="KW-0472">Membrane</keyword>
<keyword id="KW-0564">Palmitate</keyword>
<keyword id="KW-1185">Reference proteome</keyword>
<keyword id="KW-0732">Signal</keyword>
<sequence>MKHSKKLLLCISFLLITVFISGCGSMTKEDNKEEKIKKGFEKTLGMYPIKNLEDLYDKEGYRDEEFDEGDKGTWILYSEMVIQRKGDDLVTRGMILKVNRNTRTSKGNYIINKISTDSKGVSRNTQKKFPVKMENNKIIPIKKIEDSKIKREIDEFKFFAQYANFNSLKDYKNGDIATNPKVPSYSAEYDLENSDYNVKQLRKRYDIPTQQAPKLLLKGTGDLKGSSIGSKDIEFTFIEKPKKNIYFSDSLDYKPSEGH</sequence>
<comment type="subcellular location">
    <subcellularLocation>
        <location evidence="1">Cell membrane</location>
        <topology evidence="1">Lipid-anchor</topology>
    </subcellularLocation>
</comment>
<comment type="similarity">
    <text evidence="2">Belongs to the staphylococcal tandem lipoprotein family.</text>
</comment>
<feature type="signal peptide" evidence="1">
    <location>
        <begin position="1"/>
        <end position="22"/>
    </location>
</feature>
<feature type="chain" id="PRO_0000282189" description="Uncharacterized lipoprotein SERP2453">
    <location>
        <begin position="23"/>
        <end position="259"/>
    </location>
</feature>
<feature type="lipid moiety-binding region" description="N-palmitoyl cysteine" evidence="1">
    <location>
        <position position="23"/>
    </location>
</feature>
<feature type="lipid moiety-binding region" description="S-diacylglycerol cysteine" evidence="1">
    <location>
        <position position="23"/>
    </location>
</feature>
<evidence type="ECO:0000255" key="1">
    <source>
        <dbReference type="PROSITE-ProRule" id="PRU00303"/>
    </source>
</evidence>
<evidence type="ECO:0000305" key="2"/>